<keyword id="KW-0004">4Fe-4S</keyword>
<keyword id="KW-0963">Cytoplasm</keyword>
<keyword id="KW-1015">Disulfide bond</keyword>
<keyword id="KW-0408">Iron</keyword>
<keyword id="KW-0411">Iron-sulfur</keyword>
<keyword id="KW-0479">Metal-binding</keyword>
<keyword id="KW-0489">Methyltransferase</keyword>
<keyword id="KW-0698">rRNA processing</keyword>
<keyword id="KW-0949">S-adenosyl-L-methionine</keyword>
<keyword id="KW-0808">Transferase</keyword>
<keyword id="KW-0819">tRNA processing</keyword>
<accession>B3Q9D7</accession>
<dbReference type="EC" id="2.1.1.192" evidence="1"/>
<dbReference type="EMBL" id="CP001096">
    <property type="protein sequence ID" value="ACE98961.1"/>
    <property type="molecule type" value="Genomic_DNA"/>
</dbReference>
<dbReference type="RefSeq" id="WP_012494123.1">
    <property type="nucleotide sequence ID" value="NC_011004.1"/>
</dbReference>
<dbReference type="SMR" id="B3Q9D7"/>
<dbReference type="KEGG" id="rpt:Rpal_0401"/>
<dbReference type="HOGENOM" id="CLU_029101_2_0_5"/>
<dbReference type="OrthoDB" id="9793973at2"/>
<dbReference type="Proteomes" id="UP000001725">
    <property type="component" value="Chromosome"/>
</dbReference>
<dbReference type="GO" id="GO:0005737">
    <property type="term" value="C:cytoplasm"/>
    <property type="evidence" value="ECO:0007669"/>
    <property type="project" value="UniProtKB-SubCell"/>
</dbReference>
<dbReference type="GO" id="GO:0051539">
    <property type="term" value="F:4 iron, 4 sulfur cluster binding"/>
    <property type="evidence" value="ECO:0007669"/>
    <property type="project" value="UniProtKB-UniRule"/>
</dbReference>
<dbReference type="GO" id="GO:0046872">
    <property type="term" value="F:metal ion binding"/>
    <property type="evidence" value="ECO:0007669"/>
    <property type="project" value="UniProtKB-KW"/>
</dbReference>
<dbReference type="GO" id="GO:0070040">
    <property type="term" value="F:rRNA (adenine(2503)-C2-)-methyltransferase activity"/>
    <property type="evidence" value="ECO:0007669"/>
    <property type="project" value="UniProtKB-UniRule"/>
</dbReference>
<dbReference type="GO" id="GO:0019843">
    <property type="term" value="F:rRNA binding"/>
    <property type="evidence" value="ECO:0007669"/>
    <property type="project" value="UniProtKB-UniRule"/>
</dbReference>
<dbReference type="GO" id="GO:0002935">
    <property type="term" value="F:tRNA (adenine(37)-C2)-methyltransferase activity"/>
    <property type="evidence" value="ECO:0007669"/>
    <property type="project" value="UniProtKB-UniRule"/>
</dbReference>
<dbReference type="GO" id="GO:0000049">
    <property type="term" value="F:tRNA binding"/>
    <property type="evidence" value="ECO:0007669"/>
    <property type="project" value="UniProtKB-UniRule"/>
</dbReference>
<dbReference type="GO" id="GO:0070475">
    <property type="term" value="P:rRNA base methylation"/>
    <property type="evidence" value="ECO:0007669"/>
    <property type="project" value="UniProtKB-UniRule"/>
</dbReference>
<dbReference type="GO" id="GO:0030488">
    <property type="term" value="P:tRNA methylation"/>
    <property type="evidence" value="ECO:0007669"/>
    <property type="project" value="UniProtKB-UniRule"/>
</dbReference>
<dbReference type="CDD" id="cd01335">
    <property type="entry name" value="Radical_SAM"/>
    <property type="match status" value="1"/>
</dbReference>
<dbReference type="FunFam" id="3.20.20.70:FF:000008">
    <property type="entry name" value="Dual-specificity RNA methyltransferase RlmN"/>
    <property type="match status" value="1"/>
</dbReference>
<dbReference type="Gene3D" id="1.10.150.530">
    <property type="match status" value="1"/>
</dbReference>
<dbReference type="Gene3D" id="3.20.20.70">
    <property type="entry name" value="Aldolase class I"/>
    <property type="match status" value="1"/>
</dbReference>
<dbReference type="HAMAP" id="MF_01849">
    <property type="entry name" value="RNA_methyltr_RlmN"/>
    <property type="match status" value="1"/>
</dbReference>
<dbReference type="InterPro" id="IPR013785">
    <property type="entry name" value="Aldolase_TIM"/>
</dbReference>
<dbReference type="InterPro" id="IPR006638">
    <property type="entry name" value="Elp3/MiaA/NifB-like_rSAM"/>
</dbReference>
<dbReference type="InterPro" id="IPR040072">
    <property type="entry name" value="Methyltransferase_A"/>
</dbReference>
<dbReference type="InterPro" id="IPR048641">
    <property type="entry name" value="RlmN_N"/>
</dbReference>
<dbReference type="InterPro" id="IPR027492">
    <property type="entry name" value="RNA_MTrfase_RlmN"/>
</dbReference>
<dbReference type="InterPro" id="IPR004383">
    <property type="entry name" value="rRNA_lsu_MTrfase_RlmN/Cfr"/>
</dbReference>
<dbReference type="InterPro" id="IPR007197">
    <property type="entry name" value="rSAM"/>
</dbReference>
<dbReference type="NCBIfam" id="TIGR00048">
    <property type="entry name" value="rRNA_mod_RlmN"/>
    <property type="match status" value="1"/>
</dbReference>
<dbReference type="PANTHER" id="PTHR30544">
    <property type="entry name" value="23S RRNA METHYLTRANSFERASE"/>
    <property type="match status" value="1"/>
</dbReference>
<dbReference type="PANTHER" id="PTHR30544:SF5">
    <property type="entry name" value="RADICAL SAM CORE DOMAIN-CONTAINING PROTEIN"/>
    <property type="match status" value="1"/>
</dbReference>
<dbReference type="Pfam" id="PF04055">
    <property type="entry name" value="Radical_SAM"/>
    <property type="match status" value="1"/>
</dbReference>
<dbReference type="Pfam" id="PF21016">
    <property type="entry name" value="RlmN_N"/>
    <property type="match status" value="1"/>
</dbReference>
<dbReference type="PIRSF" id="PIRSF006004">
    <property type="entry name" value="CHP00048"/>
    <property type="match status" value="1"/>
</dbReference>
<dbReference type="SFLD" id="SFLDF00275">
    <property type="entry name" value="adenosine_C2_methyltransferase"/>
    <property type="match status" value="1"/>
</dbReference>
<dbReference type="SFLD" id="SFLDG01062">
    <property type="entry name" value="methyltransferase_(Class_A)"/>
    <property type="match status" value="1"/>
</dbReference>
<dbReference type="SMART" id="SM00729">
    <property type="entry name" value="Elp3"/>
    <property type="match status" value="1"/>
</dbReference>
<dbReference type="SUPFAM" id="SSF102114">
    <property type="entry name" value="Radical SAM enzymes"/>
    <property type="match status" value="1"/>
</dbReference>
<dbReference type="PROSITE" id="PS51918">
    <property type="entry name" value="RADICAL_SAM"/>
    <property type="match status" value="1"/>
</dbReference>
<evidence type="ECO:0000255" key="1">
    <source>
        <dbReference type="HAMAP-Rule" id="MF_01849"/>
    </source>
</evidence>
<evidence type="ECO:0000255" key="2">
    <source>
        <dbReference type="PROSITE-ProRule" id="PRU01266"/>
    </source>
</evidence>
<proteinExistence type="inferred from homology"/>
<feature type="chain" id="PRO_1000188595" description="Dual-specificity RNA methyltransferase RlmN">
    <location>
        <begin position="1"/>
        <end position="399"/>
    </location>
</feature>
<feature type="domain" description="Radical SAM core" evidence="2">
    <location>
        <begin position="128"/>
        <end position="371"/>
    </location>
</feature>
<feature type="active site" description="Proton acceptor" evidence="1">
    <location>
        <position position="122"/>
    </location>
</feature>
<feature type="active site" description="S-methylcysteine intermediate" evidence="1">
    <location>
        <position position="374"/>
    </location>
</feature>
<feature type="binding site" evidence="1">
    <location>
        <position position="142"/>
    </location>
    <ligand>
        <name>[4Fe-4S] cluster</name>
        <dbReference type="ChEBI" id="CHEBI:49883"/>
        <note>4Fe-4S-S-AdoMet</note>
    </ligand>
</feature>
<feature type="binding site" evidence="1">
    <location>
        <position position="146"/>
    </location>
    <ligand>
        <name>[4Fe-4S] cluster</name>
        <dbReference type="ChEBI" id="CHEBI:49883"/>
        <note>4Fe-4S-S-AdoMet</note>
    </ligand>
</feature>
<feature type="binding site" evidence="1">
    <location>
        <position position="149"/>
    </location>
    <ligand>
        <name>[4Fe-4S] cluster</name>
        <dbReference type="ChEBI" id="CHEBI:49883"/>
        <note>4Fe-4S-S-AdoMet</note>
    </ligand>
</feature>
<feature type="binding site" evidence="1">
    <location>
        <begin position="200"/>
        <end position="201"/>
    </location>
    <ligand>
        <name>S-adenosyl-L-methionine</name>
        <dbReference type="ChEBI" id="CHEBI:59789"/>
    </ligand>
</feature>
<feature type="binding site" evidence="1">
    <location>
        <position position="232"/>
    </location>
    <ligand>
        <name>S-adenosyl-L-methionine</name>
        <dbReference type="ChEBI" id="CHEBI:59789"/>
    </ligand>
</feature>
<feature type="binding site" evidence="1">
    <location>
        <begin position="254"/>
        <end position="256"/>
    </location>
    <ligand>
        <name>S-adenosyl-L-methionine</name>
        <dbReference type="ChEBI" id="CHEBI:59789"/>
    </ligand>
</feature>
<feature type="binding site" evidence="1">
    <location>
        <position position="331"/>
    </location>
    <ligand>
        <name>S-adenosyl-L-methionine</name>
        <dbReference type="ChEBI" id="CHEBI:59789"/>
    </ligand>
</feature>
<feature type="disulfide bond" description="(transient)" evidence="1">
    <location>
        <begin position="135"/>
        <end position="374"/>
    </location>
</feature>
<name>RLMN_RHOPT</name>
<gene>
    <name evidence="1" type="primary">rlmN</name>
    <name type="ordered locus">Rpal_0401</name>
</gene>
<comment type="function">
    <text evidence="1">Specifically methylates position 2 of adenine 2503 in 23S rRNA and position 2 of adenine 37 in tRNAs. m2A2503 modification seems to play a crucial role in the proofreading step occurring at the peptidyl transferase center and thus would serve to optimize ribosomal fidelity.</text>
</comment>
<comment type="catalytic activity">
    <reaction evidence="1">
        <text>adenosine(2503) in 23S rRNA + 2 reduced [2Fe-2S]-[ferredoxin] + 2 S-adenosyl-L-methionine = 2-methyladenosine(2503) in 23S rRNA + 5'-deoxyadenosine + L-methionine + 2 oxidized [2Fe-2S]-[ferredoxin] + S-adenosyl-L-homocysteine</text>
        <dbReference type="Rhea" id="RHEA:42916"/>
        <dbReference type="Rhea" id="RHEA-COMP:10000"/>
        <dbReference type="Rhea" id="RHEA-COMP:10001"/>
        <dbReference type="Rhea" id="RHEA-COMP:10152"/>
        <dbReference type="Rhea" id="RHEA-COMP:10282"/>
        <dbReference type="ChEBI" id="CHEBI:17319"/>
        <dbReference type="ChEBI" id="CHEBI:33737"/>
        <dbReference type="ChEBI" id="CHEBI:33738"/>
        <dbReference type="ChEBI" id="CHEBI:57844"/>
        <dbReference type="ChEBI" id="CHEBI:57856"/>
        <dbReference type="ChEBI" id="CHEBI:59789"/>
        <dbReference type="ChEBI" id="CHEBI:74411"/>
        <dbReference type="ChEBI" id="CHEBI:74497"/>
        <dbReference type="EC" id="2.1.1.192"/>
    </reaction>
</comment>
<comment type="catalytic activity">
    <reaction evidence="1">
        <text>adenosine(37) in tRNA + 2 reduced [2Fe-2S]-[ferredoxin] + 2 S-adenosyl-L-methionine = 2-methyladenosine(37) in tRNA + 5'-deoxyadenosine + L-methionine + 2 oxidized [2Fe-2S]-[ferredoxin] + S-adenosyl-L-homocysteine</text>
        <dbReference type="Rhea" id="RHEA:43332"/>
        <dbReference type="Rhea" id="RHEA-COMP:10000"/>
        <dbReference type="Rhea" id="RHEA-COMP:10001"/>
        <dbReference type="Rhea" id="RHEA-COMP:10162"/>
        <dbReference type="Rhea" id="RHEA-COMP:10485"/>
        <dbReference type="ChEBI" id="CHEBI:17319"/>
        <dbReference type="ChEBI" id="CHEBI:33737"/>
        <dbReference type="ChEBI" id="CHEBI:33738"/>
        <dbReference type="ChEBI" id="CHEBI:57844"/>
        <dbReference type="ChEBI" id="CHEBI:57856"/>
        <dbReference type="ChEBI" id="CHEBI:59789"/>
        <dbReference type="ChEBI" id="CHEBI:74411"/>
        <dbReference type="ChEBI" id="CHEBI:74497"/>
        <dbReference type="EC" id="2.1.1.192"/>
    </reaction>
</comment>
<comment type="cofactor">
    <cofactor evidence="1">
        <name>[4Fe-4S] cluster</name>
        <dbReference type="ChEBI" id="CHEBI:49883"/>
    </cofactor>
    <text evidence="1">Binds 1 [4Fe-4S] cluster. The cluster is coordinated with 3 cysteines and an exchangeable S-adenosyl-L-methionine.</text>
</comment>
<comment type="subcellular location">
    <subcellularLocation>
        <location evidence="1">Cytoplasm</location>
    </subcellularLocation>
</comment>
<comment type="miscellaneous">
    <text evidence="1">Reaction proceeds by a ping-pong mechanism involving intermediate methylation of a conserved cysteine residue.</text>
</comment>
<comment type="similarity">
    <text evidence="1">Belongs to the radical SAM superfamily. RlmN family.</text>
</comment>
<organism>
    <name type="scientific">Rhodopseudomonas palustris (strain TIE-1)</name>
    <dbReference type="NCBI Taxonomy" id="395960"/>
    <lineage>
        <taxon>Bacteria</taxon>
        <taxon>Pseudomonadati</taxon>
        <taxon>Pseudomonadota</taxon>
        <taxon>Alphaproteobacteria</taxon>
        <taxon>Hyphomicrobiales</taxon>
        <taxon>Nitrobacteraceae</taxon>
        <taxon>Rhodopseudomonas</taxon>
    </lineage>
</organism>
<protein>
    <recommendedName>
        <fullName evidence="1">Dual-specificity RNA methyltransferase RlmN</fullName>
        <ecNumber evidence="1">2.1.1.192</ecNumber>
    </recommendedName>
    <alternativeName>
        <fullName evidence="1">23S rRNA (adenine(2503)-C(2))-methyltransferase</fullName>
    </alternativeName>
    <alternativeName>
        <fullName evidence="1">23S rRNA m2A2503 methyltransferase</fullName>
    </alternativeName>
    <alternativeName>
        <fullName evidence="1">Ribosomal RNA large subunit methyltransferase N</fullName>
    </alternativeName>
    <alternativeName>
        <fullName evidence="1">tRNA (adenine(37)-C(2))-methyltransferase</fullName>
    </alternativeName>
    <alternativeName>
        <fullName evidence="1">tRNA m2A37 methyltransferase</fullName>
    </alternativeName>
</protein>
<sequence length="399" mass="44435">MTPSAASALVEKTPLETYVPPAKPSLIGLSRAQLCDRLGDVGVAPPQRKMRAQQLWHWMYVRGARDFSEMTNVSKEMRATLAEHFTVDRPEVVAEQISADGTRKWLLRLPSGGDGQKAHEVECVYIPETDRGTLCVSSQVGCTLNCAFCHTGTQRLVRNLTAGEIVGQVMVARDRLGDWIDRETPNGNRLITNIVMMGMGEPLYNFDAVRDALLIVSDNEGIGISRRRITLSTSGVVPNIKRTGDEIGVMLAISLHAVRDELRDELVPLNRKYPLKELLQACRDYPGASNARRITFEYVMLKGVNDSLDDARKLVQLLKGIPAKINLIPFNPWPGSNYECSDWDQIEKFSEYVFNAGYSSPVRTPRGRDILAACGQLKSETEKLSVRERNALRAMAMTD</sequence>
<reference key="1">
    <citation type="submission" date="2008-05" db="EMBL/GenBank/DDBJ databases">
        <title>Complete sequence of Rhodopseudomonas palustris TIE-1.</title>
        <authorList>
            <consortium name="US DOE Joint Genome Institute"/>
            <person name="Lucas S."/>
            <person name="Copeland A."/>
            <person name="Lapidus A."/>
            <person name="Glavina del Rio T."/>
            <person name="Dalin E."/>
            <person name="Tice H."/>
            <person name="Pitluck S."/>
            <person name="Chain P."/>
            <person name="Malfatti S."/>
            <person name="Shin M."/>
            <person name="Vergez L."/>
            <person name="Lang D."/>
            <person name="Schmutz J."/>
            <person name="Larimer F."/>
            <person name="Land M."/>
            <person name="Hauser L."/>
            <person name="Kyrpides N."/>
            <person name="Mikhailova N."/>
            <person name="Emerson D."/>
            <person name="Newman D.K."/>
            <person name="Roden E."/>
            <person name="Richardson P."/>
        </authorList>
    </citation>
    <scope>NUCLEOTIDE SEQUENCE [LARGE SCALE GENOMIC DNA]</scope>
    <source>
        <strain>TIE-1</strain>
    </source>
</reference>